<gene>
    <name evidence="1" type="primary">proB</name>
    <name type="ordered locus">BCE33L2712</name>
</gene>
<protein>
    <recommendedName>
        <fullName evidence="1">Glutamate 5-kinase</fullName>
        <ecNumber evidence="1">2.7.2.11</ecNumber>
    </recommendedName>
    <alternativeName>
        <fullName evidence="1">Gamma-glutamyl kinase</fullName>
        <shortName evidence="1">GK</shortName>
    </alternativeName>
</protein>
<keyword id="KW-0028">Amino-acid biosynthesis</keyword>
<keyword id="KW-0067">ATP-binding</keyword>
<keyword id="KW-0963">Cytoplasm</keyword>
<keyword id="KW-0418">Kinase</keyword>
<keyword id="KW-0547">Nucleotide-binding</keyword>
<keyword id="KW-0641">Proline biosynthesis</keyword>
<keyword id="KW-0808">Transferase</keyword>
<evidence type="ECO:0000255" key="1">
    <source>
        <dbReference type="HAMAP-Rule" id="MF_00456"/>
    </source>
</evidence>
<evidence type="ECO:0000305" key="2"/>
<sequence>MKKQRIVVKIGSSSLADSHEGISKEQLSDHVAALARLKEEGHEVLLITSGAVAAGFSALGYPSRPVTIKGKQAAAAVGQSLLMQAYTEEFRKYGIVTAQLLLTRSDFSRKEQYSNAYATLGELLNRSALPIINENDSISLEELTFGDNDMLSALVSGLVSADMLMIFTDVNGLYDKNPQKNEDAKKYYFLPEVTEEIASLAGDAGSKLGTGGMKSKVDAAKTALSLGVSVFIGTGRGQEKFVDVLKGKGDGTYVGNAPQKEMKMNKQWIALHSVVSGQIEIDAGAATAIIQHGKSLLPAGVTNVSGFFQVGEVVEVMTQQGRVIGKGQCTYSAEELRDVKGMQSQHIQARGERHSYEVIHRDHWVSL</sequence>
<proteinExistence type="inferred from homology"/>
<name>PROB_BACCZ</name>
<feature type="chain" id="PRO_0000109635" description="Glutamate 5-kinase">
    <location>
        <begin position="1"/>
        <end position="367"/>
    </location>
</feature>
<feature type="domain" description="PUA" evidence="1">
    <location>
        <begin position="276"/>
        <end position="350"/>
    </location>
</feature>
<feature type="binding site" evidence="1">
    <location>
        <position position="9"/>
    </location>
    <ligand>
        <name>ATP</name>
        <dbReference type="ChEBI" id="CHEBI:30616"/>
    </ligand>
</feature>
<feature type="binding site" evidence="1">
    <location>
        <position position="49"/>
    </location>
    <ligand>
        <name>substrate</name>
    </ligand>
</feature>
<feature type="binding site" evidence="1">
    <location>
        <position position="136"/>
    </location>
    <ligand>
        <name>substrate</name>
    </ligand>
</feature>
<feature type="binding site" evidence="1">
    <location>
        <position position="148"/>
    </location>
    <ligand>
        <name>substrate</name>
    </ligand>
</feature>
<feature type="binding site" evidence="1">
    <location>
        <begin position="168"/>
        <end position="169"/>
    </location>
    <ligand>
        <name>ATP</name>
        <dbReference type="ChEBI" id="CHEBI:30616"/>
    </ligand>
</feature>
<feature type="binding site" evidence="1">
    <location>
        <begin position="210"/>
        <end position="216"/>
    </location>
    <ligand>
        <name>ATP</name>
        <dbReference type="ChEBI" id="CHEBI:30616"/>
    </ligand>
</feature>
<dbReference type="EC" id="2.7.2.11" evidence="1"/>
<dbReference type="EMBL" id="CP000001">
    <property type="protein sequence ID" value="AAU17549.1"/>
    <property type="status" value="ALT_INIT"/>
    <property type="molecule type" value="Genomic_DNA"/>
</dbReference>
<dbReference type="RefSeq" id="WP_000744712.1">
    <property type="nucleotide sequence ID" value="NZ_CP009968.1"/>
</dbReference>
<dbReference type="SMR" id="Q639W8"/>
<dbReference type="KEGG" id="bcz:BCE33L2712"/>
<dbReference type="PATRIC" id="fig|288681.22.peg.2750"/>
<dbReference type="UniPathway" id="UPA00098">
    <property type="reaction ID" value="UER00359"/>
</dbReference>
<dbReference type="Proteomes" id="UP000002612">
    <property type="component" value="Chromosome"/>
</dbReference>
<dbReference type="GO" id="GO:0005829">
    <property type="term" value="C:cytosol"/>
    <property type="evidence" value="ECO:0007669"/>
    <property type="project" value="TreeGrafter"/>
</dbReference>
<dbReference type="GO" id="GO:0005524">
    <property type="term" value="F:ATP binding"/>
    <property type="evidence" value="ECO:0007669"/>
    <property type="project" value="UniProtKB-KW"/>
</dbReference>
<dbReference type="GO" id="GO:0004349">
    <property type="term" value="F:glutamate 5-kinase activity"/>
    <property type="evidence" value="ECO:0007669"/>
    <property type="project" value="UniProtKB-UniRule"/>
</dbReference>
<dbReference type="GO" id="GO:0003723">
    <property type="term" value="F:RNA binding"/>
    <property type="evidence" value="ECO:0007669"/>
    <property type="project" value="InterPro"/>
</dbReference>
<dbReference type="GO" id="GO:0055129">
    <property type="term" value="P:L-proline biosynthetic process"/>
    <property type="evidence" value="ECO:0007669"/>
    <property type="project" value="UniProtKB-UniRule"/>
</dbReference>
<dbReference type="CDD" id="cd04242">
    <property type="entry name" value="AAK_G5K_ProB"/>
    <property type="match status" value="1"/>
</dbReference>
<dbReference type="CDD" id="cd21157">
    <property type="entry name" value="PUA_G5K"/>
    <property type="match status" value="1"/>
</dbReference>
<dbReference type="FunFam" id="2.30.130.10:FF:000007">
    <property type="entry name" value="Glutamate 5-kinase"/>
    <property type="match status" value="1"/>
</dbReference>
<dbReference type="FunFam" id="3.40.1160.10:FF:000018">
    <property type="entry name" value="Glutamate 5-kinase"/>
    <property type="match status" value="1"/>
</dbReference>
<dbReference type="Gene3D" id="3.40.1160.10">
    <property type="entry name" value="Acetylglutamate kinase-like"/>
    <property type="match status" value="1"/>
</dbReference>
<dbReference type="Gene3D" id="2.30.130.10">
    <property type="entry name" value="PUA domain"/>
    <property type="match status" value="1"/>
</dbReference>
<dbReference type="HAMAP" id="MF_00456">
    <property type="entry name" value="ProB"/>
    <property type="match status" value="1"/>
</dbReference>
<dbReference type="InterPro" id="IPR036393">
    <property type="entry name" value="AceGlu_kinase-like_sf"/>
</dbReference>
<dbReference type="InterPro" id="IPR001048">
    <property type="entry name" value="Asp/Glu/Uridylate_kinase"/>
</dbReference>
<dbReference type="InterPro" id="IPR041739">
    <property type="entry name" value="G5K_ProB"/>
</dbReference>
<dbReference type="InterPro" id="IPR001057">
    <property type="entry name" value="Glu/AcGlu_kinase"/>
</dbReference>
<dbReference type="InterPro" id="IPR011529">
    <property type="entry name" value="Glu_5kinase"/>
</dbReference>
<dbReference type="InterPro" id="IPR005715">
    <property type="entry name" value="Glu_5kinase/COase_Synthase"/>
</dbReference>
<dbReference type="InterPro" id="IPR019797">
    <property type="entry name" value="Glutamate_5-kinase_CS"/>
</dbReference>
<dbReference type="InterPro" id="IPR002478">
    <property type="entry name" value="PUA"/>
</dbReference>
<dbReference type="InterPro" id="IPR015947">
    <property type="entry name" value="PUA-like_sf"/>
</dbReference>
<dbReference type="InterPro" id="IPR036974">
    <property type="entry name" value="PUA_sf"/>
</dbReference>
<dbReference type="NCBIfam" id="TIGR01027">
    <property type="entry name" value="proB"/>
    <property type="match status" value="1"/>
</dbReference>
<dbReference type="PANTHER" id="PTHR43654">
    <property type="entry name" value="GLUTAMATE 5-KINASE"/>
    <property type="match status" value="1"/>
</dbReference>
<dbReference type="PANTHER" id="PTHR43654:SF1">
    <property type="entry name" value="ISOPENTENYL PHOSPHATE KINASE"/>
    <property type="match status" value="1"/>
</dbReference>
<dbReference type="Pfam" id="PF00696">
    <property type="entry name" value="AA_kinase"/>
    <property type="match status" value="1"/>
</dbReference>
<dbReference type="Pfam" id="PF01472">
    <property type="entry name" value="PUA"/>
    <property type="match status" value="1"/>
</dbReference>
<dbReference type="PIRSF" id="PIRSF000729">
    <property type="entry name" value="GK"/>
    <property type="match status" value="1"/>
</dbReference>
<dbReference type="PRINTS" id="PR00474">
    <property type="entry name" value="GLU5KINASE"/>
</dbReference>
<dbReference type="SMART" id="SM00359">
    <property type="entry name" value="PUA"/>
    <property type="match status" value="1"/>
</dbReference>
<dbReference type="SUPFAM" id="SSF53633">
    <property type="entry name" value="Carbamate kinase-like"/>
    <property type="match status" value="1"/>
</dbReference>
<dbReference type="SUPFAM" id="SSF88697">
    <property type="entry name" value="PUA domain-like"/>
    <property type="match status" value="1"/>
</dbReference>
<dbReference type="PROSITE" id="PS00902">
    <property type="entry name" value="GLUTAMATE_5_KINASE"/>
    <property type="match status" value="1"/>
</dbReference>
<dbReference type="PROSITE" id="PS50890">
    <property type="entry name" value="PUA"/>
    <property type="match status" value="1"/>
</dbReference>
<organism>
    <name type="scientific">Bacillus cereus (strain ZK / E33L)</name>
    <dbReference type="NCBI Taxonomy" id="288681"/>
    <lineage>
        <taxon>Bacteria</taxon>
        <taxon>Bacillati</taxon>
        <taxon>Bacillota</taxon>
        <taxon>Bacilli</taxon>
        <taxon>Bacillales</taxon>
        <taxon>Bacillaceae</taxon>
        <taxon>Bacillus</taxon>
        <taxon>Bacillus cereus group</taxon>
    </lineage>
</organism>
<accession>Q639W8</accession>
<reference key="1">
    <citation type="journal article" date="2006" name="J. Bacteriol.">
        <title>Pathogenomic sequence analysis of Bacillus cereus and Bacillus thuringiensis isolates closely related to Bacillus anthracis.</title>
        <authorList>
            <person name="Han C.S."/>
            <person name="Xie G."/>
            <person name="Challacombe J.F."/>
            <person name="Altherr M.R."/>
            <person name="Bhotika S.S."/>
            <person name="Bruce D."/>
            <person name="Campbell C.S."/>
            <person name="Campbell M.L."/>
            <person name="Chen J."/>
            <person name="Chertkov O."/>
            <person name="Cleland C."/>
            <person name="Dimitrijevic M."/>
            <person name="Doggett N.A."/>
            <person name="Fawcett J.J."/>
            <person name="Glavina T."/>
            <person name="Goodwin L.A."/>
            <person name="Hill K.K."/>
            <person name="Hitchcock P."/>
            <person name="Jackson P.J."/>
            <person name="Keim P."/>
            <person name="Kewalramani A.R."/>
            <person name="Longmire J."/>
            <person name="Lucas S."/>
            <person name="Malfatti S."/>
            <person name="McMurry K."/>
            <person name="Meincke L.J."/>
            <person name="Misra M."/>
            <person name="Moseman B.L."/>
            <person name="Mundt M."/>
            <person name="Munk A.C."/>
            <person name="Okinaka R.T."/>
            <person name="Parson-Quintana B."/>
            <person name="Reilly L.P."/>
            <person name="Richardson P."/>
            <person name="Robinson D.L."/>
            <person name="Rubin E."/>
            <person name="Saunders E."/>
            <person name="Tapia R."/>
            <person name="Tesmer J.G."/>
            <person name="Thayer N."/>
            <person name="Thompson L.S."/>
            <person name="Tice H."/>
            <person name="Ticknor L.O."/>
            <person name="Wills P.L."/>
            <person name="Brettin T.S."/>
            <person name="Gilna P."/>
        </authorList>
    </citation>
    <scope>NUCLEOTIDE SEQUENCE [LARGE SCALE GENOMIC DNA]</scope>
    <source>
        <strain>ZK / E33L</strain>
    </source>
</reference>
<comment type="function">
    <text evidence="1">Catalyzes the transfer of a phosphate group to glutamate to form L-glutamate 5-phosphate.</text>
</comment>
<comment type="catalytic activity">
    <reaction evidence="1">
        <text>L-glutamate + ATP = L-glutamyl 5-phosphate + ADP</text>
        <dbReference type="Rhea" id="RHEA:14877"/>
        <dbReference type="ChEBI" id="CHEBI:29985"/>
        <dbReference type="ChEBI" id="CHEBI:30616"/>
        <dbReference type="ChEBI" id="CHEBI:58274"/>
        <dbReference type="ChEBI" id="CHEBI:456216"/>
        <dbReference type="EC" id="2.7.2.11"/>
    </reaction>
</comment>
<comment type="pathway">
    <text evidence="1">Amino-acid biosynthesis; L-proline biosynthesis; L-glutamate 5-semialdehyde from L-glutamate: step 1/2.</text>
</comment>
<comment type="subcellular location">
    <subcellularLocation>
        <location evidence="1">Cytoplasm</location>
    </subcellularLocation>
</comment>
<comment type="similarity">
    <text evidence="1">Belongs to the glutamate 5-kinase family.</text>
</comment>
<comment type="sequence caution" evidence="2">
    <conflict type="erroneous initiation">
        <sequence resource="EMBL-CDS" id="AAU17549"/>
    </conflict>
</comment>